<accession>A3NZ74</accession>
<comment type="function">
    <text evidence="1">Catalyzes the specific phosphorylation of 1,6-anhydro-N-acetylmuramic acid (anhMurNAc) with the simultaneous cleavage of the 1,6-anhydro ring, generating MurNAc-6-P. Is required for the utilization of anhMurNAc either imported from the medium or derived from its own cell wall murein, and thus plays a role in cell wall recycling.</text>
</comment>
<comment type="catalytic activity">
    <reaction evidence="1">
        <text>1,6-anhydro-N-acetyl-beta-muramate + ATP + H2O = N-acetyl-D-muramate 6-phosphate + ADP + H(+)</text>
        <dbReference type="Rhea" id="RHEA:24952"/>
        <dbReference type="ChEBI" id="CHEBI:15377"/>
        <dbReference type="ChEBI" id="CHEBI:15378"/>
        <dbReference type="ChEBI" id="CHEBI:30616"/>
        <dbReference type="ChEBI" id="CHEBI:58690"/>
        <dbReference type="ChEBI" id="CHEBI:58722"/>
        <dbReference type="ChEBI" id="CHEBI:456216"/>
        <dbReference type="EC" id="2.7.1.170"/>
    </reaction>
</comment>
<comment type="pathway">
    <text evidence="1">Amino-sugar metabolism; 1,6-anhydro-N-acetylmuramate degradation.</text>
</comment>
<comment type="pathway">
    <text evidence="1">Cell wall biogenesis; peptidoglycan recycling.</text>
</comment>
<comment type="similarity">
    <text evidence="1">Belongs to the anhydro-N-acetylmuramic acid kinase family.</text>
</comment>
<evidence type="ECO:0000255" key="1">
    <source>
        <dbReference type="HAMAP-Rule" id="MF_01270"/>
    </source>
</evidence>
<proteinExistence type="inferred from homology"/>
<name>ANMK_BURP0</name>
<organism>
    <name type="scientific">Burkholderia pseudomallei (strain 1106a)</name>
    <dbReference type="NCBI Taxonomy" id="357348"/>
    <lineage>
        <taxon>Bacteria</taxon>
        <taxon>Pseudomonadati</taxon>
        <taxon>Pseudomonadota</taxon>
        <taxon>Betaproteobacteria</taxon>
        <taxon>Burkholderiales</taxon>
        <taxon>Burkholderiaceae</taxon>
        <taxon>Burkholderia</taxon>
        <taxon>pseudomallei group</taxon>
    </lineage>
</organism>
<protein>
    <recommendedName>
        <fullName evidence="1">Anhydro-N-acetylmuramic acid kinase</fullName>
        <ecNumber evidence="1">2.7.1.170</ecNumber>
    </recommendedName>
    <alternativeName>
        <fullName evidence="1">AnhMurNAc kinase</fullName>
    </alternativeName>
</protein>
<dbReference type="EC" id="2.7.1.170" evidence="1"/>
<dbReference type="EMBL" id="CP000572">
    <property type="protein sequence ID" value="ABN91641.1"/>
    <property type="molecule type" value="Genomic_DNA"/>
</dbReference>
<dbReference type="SMR" id="A3NZ74"/>
<dbReference type="KEGG" id="bpl:BURPS1106A_3408"/>
<dbReference type="HOGENOM" id="CLU_038782_0_0_4"/>
<dbReference type="UniPathway" id="UPA00343"/>
<dbReference type="UniPathway" id="UPA00544"/>
<dbReference type="Proteomes" id="UP000006738">
    <property type="component" value="Chromosome I"/>
</dbReference>
<dbReference type="GO" id="GO:0005524">
    <property type="term" value="F:ATP binding"/>
    <property type="evidence" value="ECO:0007669"/>
    <property type="project" value="UniProtKB-UniRule"/>
</dbReference>
<dbReference type="GO" id="GO:0016301">
    <property type="term" value="F:kinase activity"/>
    <property type="evidence" value="ECO:0007669"/>
    <property type="project" value="UniProtKB-KW"/>
</dbReference>
<dbReference type="GO" id="GO:0016773">
    <property type="term" value="F:phosphotransferase activity, alcohol group as acceptor"/>
    <property type="evidence" value="ECO:0007669"/>
    <property type="project" value="UniProtKB-UniRule"/>
</dbReference>
<dbReference type="GO" id="GO:0097175">
    <property type="term" value="P:1,6-anhydro-N-acetyl-beta-muramic acid catabolic process"/>
    <property type="evidence" value="ECO:0007669"/>
    <property type="project" value="UniProtKB-UniRule"/>
</dbReference>
<dbReference type="GO" id="GO:0006040">
    <property type="term" value="P:amino sugar metabolic process"/>
    <property type="evidence" value="ECO:0007669"/>
    <property type="project" value="InterPro"/>
</dbReference>
<dbReference type="GO" id="GO:0009254">
    <property type="term" value="P:peptidoglycan turnover"/>
    <property type="evidence" value="ECO:0007669"/>
    <property type="project" value="UniProtKB-UniRule"/>
</dbReference>
<dbReference type="Gene3D" id="3.30.420.40">
    <property type="match status" value="2"/>
</dbReference>
<dbReference type="HAMAP" id="MF_01270">
    <property type="entry name" value="AnhMurNAc_kinase"/>
    <property type="match status" value="1"/>
</dbReference>
<dbReference type="InterPro" id="IPR005338">
    <property type="entry name" value="Anhydro_N_Ac-Mur_kinase"/>
</dbReference>
<dbReference type="InterPro" id="IPR043129">
    <property type="entry name" value="ATPase_NBD"/>
</dbReference>
<dbReference type="NCBIfam" id="NF007139">
    <property type="entry name" value="PRK09585.1-3"/>
    <property type="match status" value="1"/>
</dbReference>
<dbReference type="NCBIfam" id="NF007140">
    <property type="entry name" value="PRK09585.1-4"/>
    <property type="match status" value="1"/>
</dbReference>
<dbReference type="PANTHER" id="PTHR30605">
    <property type="entry name" value="ANHYDRO-N-ACETYLMURAMIC ACID KINASE"/>
    <property type="match status" value="1"/>
</dbReference>
<dbReference type="PANTHER" id="PTHR30605:SF0">
    <property type="entry name" value="ANHYDRO-N-ACETYLMURAMIC ACID KINASE"/>
    <property type="match status" value="1"/>
</dbReference>
<dbReference type="Pfam" id="PF03702">
    <property type="entry name" value="AnmK"/>
    <property type="match status" value="1"/>
</dbReference>
<dbReference type="SUPFAM" id="SSF53067">
    <property type="entry name" value="Actin-like ATPase domain"/>
    <property type="match status" value="1"/>
</dbReference>
<feature type="chain" id="PRO_1000165159" description="Anhydro-N-acetylmuramic acid kinase">
    <location>
        <begin position="1"/>
        <end position="392"/>
    </location>
</feature>
<feature type="binding site" evidence="1">
    <location>
        <begin position="22"/>
        <end position="29"/>
    </location>
    <ligand>
        <name>ATP</name>
        <dbReference type="ChEBI" id="CHEBI:30616"/>
    </ligand>
</feature>
<reference key="1">
    <citation type="journal article" date="2010" name="Genome Biol. Evol.">
        <title>Continuing evolution of Burkholderia mallei through genome reduction and large-scale rearrangements.</title>
        <authorList>
            <person name="Losada L."/>
            <person name="Ronning C.M."/>
            <person name="DeShazer D."/>
            <person name="Woods D."/>
            <person name="Fedorova N."/>
            <person name="Kim H.S."/>
            <person name="Shabalina S.A."/>
            <person name="Pearson T.R."/>
            <person name="Brinkac L."/>
            <person name="Tan P."/>
            <person name="Nandi T."/>
            <person name="Crabtree J."/>
            <person name="Badger J."/>
            <person name="Beckstrom-Sternberg S."/>
            <person name="Saqib M."/>
            <person name="Schutzer S.E."/>
            <person name="Keim P."/>
            <person name="Nierman W.C."/>
        </authorList>
    </citation>
    <scope>NUCLEOTIDE SEQUENCE [LARGE SCALE GENOMIC DNA]</scope>
    <source>
        <strain>1106a</strain>
    </source>
</reference>
<gene>
    <name evidence="1" type="primary">anmK</name>
    <name type="ordered locus">BURPS1106A_3408</name>
</gene>
<sequence>MTSNRMQTGHPADGVYFGLMSGTSMDGVDGIAVRFEAGKPPAVLSEAFVGFADTLRDALFALQQPGDDEIEREALAANALAARYAVCCHELLRTAGLSPDDVRALGVHGQTVRHRPERGYTRQLNNAALLAELTRIDVIADFRSRDVAAGGQGAPLVPAFHATVFGSPDETRVVCNLGGISNITILPAGGGPQGEGHARNDTVRGHDCGPANALIDAWVERHLKQPFDDGGRFAARGKVDETLLAALLDEPYFRQNAPKSTGRDLFNADWLDAKLAGFQHLAPENVQATLTALTAATVADEIARHAGDCRAVYVCGGGARNPVLLDALATALAARGLDAAVATTAALGVPPQQVESLAFAWLAYRFNARAPGNVSTVTGAAGERVLGALYPR</sequence>
<keyword id="KW-0067">ATP-binding</keyword>
<keyword id="KW-0119">Carbohydrate metabolism</keyword>
<keyword id="KW-0418">Kinase</keyword>
<keyword id="KW-0547">Nucleotide-binding</keyword>
<keyword id="KW-0808">Transferase</keyword>